<feature type="chain" id="PRO_1000009111" description="N-acetylmuramic acid 6-phosphate etherase">
    <location>
        <begin position="1"/>
        <end position="302"/>
    </location>
</feature>
<feature type="domain" description="SIS" evidence="1">
    <location>
        <begin position="58"/>
        <end position="221"/>
    </location>
</feature>
<feature type="active site" description="Proton donor" evidence="1">
    <location>
        <position position="86"/>
    </location>
</feature>
<feature type="active site" evidence="1">
    <location>
        <position position="117"/>
    </location>
</feature>
<organism>
    <name type="scientific">Clostridium botulinum (strain Hall / ATCC 3502 / NCTC 13319 / Type A)</name>
    <dbReference type="NCBI Taxonomy" id="441771"/>
    <lineage>
        <taxon>Bacteria</taxon>
        <taxon>Bacillati</taxon>
        <taxon>Bacillota</taxon>
        <taxon>Clostridia</taxon>
        <taxon>Eubacteriales</taxon>
        <taxon>Clostridiaceae</taxon>
        <taxon>Clostridium</taxon>
    </lineage>
</organism>
<name>MURQ_CLOBH</name>
<evidence type="ECO:0000255" key="1">
    <source>
        <dbReference type="HAMAP-Rule" id="MF_00068"/>
    </source>
</evidence>
<proteinExistence type="inferred from homology"/>
<protein>
    <recommendedName>
        <fullName evidence="1">N-acetylmuramic acid 6-phosphate etherase</fullName>
        <shortName evidence="1">MurNAc-6-P etherase</shortName>
        <ecNumber evidence="1">4.2.1.126</ecNumber>
    </recommendedName>
    <alternativeName>
        <fullName evidence="1">N-acetylmuramic acid 6-phosphate hydrolase</fullName>
    </alternativeName>
    <alternativeName>
        <fullName evidence="1">N-acetylmuramic acid 6-phosphate lyase</fullName>
    </alternativeName>
</protein>
<sequence length="302" mass="32610">MTNISLDKLVTESRNENTKNIDRVETLEMLKMINNEDKKVAEAVEKELIHIAKAVDKIGEAFLNGGRLIYVGAGTSGRLGVLDASECPPTYGVSYDLVRGIIAGGESAMFKAREGAEDSKKLCIKDLKNINFGKNDILAGIAASGRTPYVIGGLEYANGIGATTISVTCNPESEMSKIANISIAPVVGPEAITGSTRMKAGTAQKMVLNMLSTGAMVKTGKVYGNLMVDLKATNEKLVERAKRIVMQATGSKREQVEKILKETNFDVKLSIFMIESSLDKIKAKEILDKNKGYIVEAIKEIS</sequence>
<reference key="1">
    <citation type="journal article" date="2007" name="Genome Res.">
        <title>Genome sequence of a proteolytic (Group I) Clostridium botulinum strain Hall A and comparative analysis of the clostridial genomes.</title>
        <authorList>
            <person name="Sebaihia M."/>
            <person name="Peck M.W."/>
            <person name="Minton N.P."/>
            <person name="Thomson N.R."/>
            <person name="Holden M.T.G."/>
            <person name="Mitchell W.J."/>
            <person name="Carter A.T."/>
            <person name="Bentley S.D."/>
            <person name="Mason D.R."/>
            <person name="Crossman L."/>
            <person name="Paul C.J."/>
            <person name="Ivens A."/>
            <person name="Wells-Bennik M.H.J."/>
            <person name="Davis I.J."/>
            <person name="Cerdeno-Tarraga A.M."/>
            <person name="Churcher C."/>
            <person name="Quail M.A."/>
            <person name="Chillingworth T."/>
            <person name="Feltwell T."/>
            <person name="Fraser A."/>
            <person name="Goodhead I."/>
            <person name="Hance Z."/>
            <person name="Jagels K."/>
            <person name="Larke N."/>
            <person name="Maddison M."/>
            <person name="Moule S."/>
            <person name="Mungall K."/>
            <person name="Norbertczak H."/>
            <person name="Rabbinowitsch E."/>
            <person name="Sanders M."/>
            <person name="Simmonds M."/>
            <person name="White B."/>
            <person name="Whithead S."/>
            <person name="Parkhill J."/>
        </authorList>
    </citation>
    <scope>NUCLEOTIDE SEQUENCE [LARGE SCALE GENOMIC DNA]</scope>
    <source>
        <strain>Hall / ATCC 3502 / NCTC 13319 / Type A</strain>
    </source>
</reference>
<reference key="2">
    <citation type="journal article" date="2007" name="PLoS ONE">
        <title>Analysis of the neurotoxin complex genes in Clostridium botulinum A1-A4 and B1 strains: BoNT/A3, /Ba4 and /B1 clusters are located within plasmids.</title>
        <authorList>
            <person name="Smith T.J."/>
            <person name="Hill K.K."/>
            <person name="Foley B.T."/>
            <person name="Detter J.C."/>
            <person name="Munk A.C."/>
            <person name="Bruce D.C."/>
            <person name="Doggett N.A."/>
            <person name="Smith L.A."/>
            <person name="Marks J.D."/>
            <person name="Xie G."/>
            <person name="Brettin T.S."/>
        </authorList>
    </citation>
    <scope>NUCLEOTIDE SEQUENCE [LARGE SCALE GENOMIC DNA]</scope>
    <source>
        <strain>Hall / ATCC 3502 / NCTC 13319 / Type A</strain>
    </source>
</reference>
<comment type="function">
    <text evidence="1">Specifically catalyzes the cleavage of the D-lactyl ether substituent of MurNAc 6-phosphate, producing GlcNAc 6-phosphate and D-lactate.</text>
</comment>
<comment type="catalytic activity">
    <reaction evidence="1">
        <text>N-acetyl-D-muramate 6-phosphate + H2O = N-acetyl-D-glucosamine 6-phosphate + (R)-lactate</text>
        <dbReference type="Rhea" id="RHEA:26410"/>
        <dbReference type="ChEBI" id="CHEBI:15377"/>
        <dbReference type="ChEBI" id="CHEBI:16004"/>
        <dbReference type="ChEBI" id="CHEBI:57513"/>
        <dbReference type="ChEBI" id="CHEBI:58722"/>
        <dbReference type="EC" id="4.2.1.126"/>
    </reaction>
</comment>
<comment type="pathway">
    <text evidence="1">Amino-sugar metabolism; N-acetylmuramate degradation.</text>
</comment>
<comment type="subunit">
    <text evidence="1">Homodimer.</text>
</comment>
<comment type="miscellaneous">
    <text evidence="1">A lyase-type mechanism (elimination/hydration) is suggested for the cleavage of the lactyl ether bond of MurNAc 6-phosphate, with the formation of an alpha,beta-unsaturated aldehyde intermediate with (E)-stereochemistry, followed by the syn addition of water to give product.</text>
</comment>
<comment type="similarity">
    <text evidence="1">Belongs to the GCKR-like family. MurNAc-6-P etherase subfamily.</text>
</comment>
<keyword id="KW-0119">Carbohydrate metabolism</keyword>
<keyword id="KW-0456">Lyase</keyword>
<keyword id="KW-1185">Reference proteome</keyword>
<dbReference type="EC" id="4.2.1.126" evidence="1"/>
<dbReference type="EMBL" id="CP000727">
    <property type="protein sequence ID" value="ABS38151.1"/>
    <property type="molecule type" value="Genomic_DNA"/>
</dbReference>
<dbReference type="EMBL" id="AM412317">
    <property type="protein sequence ID" value="CAL82890.1"/>
    <property type="molecule type" value="Genomic_DNA"/>
</dbReference>
<dbReference type="RefSeq" id="WP_011948949.1">
    <property type="nucleotide sequence ID" value="NC_009698.1"/>
</dbReference>
<dbReference type="RefSeq" id="YP_001253863.1">
    <property type="nucleotide sequence ID" value="NC_009495.1"/>
</dbReference>
<dbReference type="RefSeq" id="YP_001387246.1">
    <property type="nucleotide sequence ID" value="NC_009698.1"/>
</dbReference>
<dbReference type="SMR" id="A5I1H8"/>
<dbReference type="GeneID" id="5185598"/>
<dbReference type="KEGG" id="cbh:CLC_1381"/>
<dbReference type="KEGG" id="cbo:CBO1343"/>
<dbReference type="PATRIC" id="fig|413999.7.peg.1326"/>
<dbReference type="HOGENOM" id="CLU_049049_1_1_9"/>
<dbReference type="UniPathway" id="UPA00342"/>
<dbReference type="PRO" id="PR:A5I1H8"/>
<dbReference type="Proteomes" id="UP000001986">
    <property type="component" value="Chromosome"/>
</dbReference>
<dbReference type="GO" id="GO:0097367">
    <property type="term" value="F:carbohydrate derivative binding"/>
    <property type="evidence" value="ECO:0007669"/>
    <property type="project" value="InterPro"/>
</dbReference>
<dbReference type="GO" id="GO:0016835">
    <property type="term" value="F:carbon-oxygen lyase activity"/>
    <property type="evidence" value="ECO:0000318"/>
    <property type="project" value="GO_Central"/>
</dbReference>
<dbReference type="GO" id="GO:0016803">
    <property type="term" value="F:ether hydrolase activity"/>
    <property type="evidence" value="ECO:0000318"/>
    <property type="project" value="GO_Central"/>
</dbReference>
<dbReference type="GO" id="GO:0046348">
    <property type="term" value="P:amino sugar catabolic process"/>
    <property type="evidence" value="ECO:0000318"/>
    <property type="project" value="GO_Central"/>
</dbReference>
<dbReference type="GO" id="GO:0097173">
    <property type="term" value="P:N-acetylmuramic acid catabolic process"/>
    <property type="evidence" value="ECO:0007669"/>
    <property type="project" value="UniProtKB-UniPathway"/>
</dbReference>
<dbReference type="GO" id="GO:0009254">
    <property type="term" value="P:peptidoglycan turnover"/>
    <property type="evidence" value="ECO:0000318"/>
    <property type="project" value="GO_Central"/>
</dbReference>
<dbReference type="CDD" id="cd05007">
    <property type="entry name" value="SIS_Etherase"/>
    <property type="match status" value="1"/>
</dbReference>
<dbReference type="FunFam" id="1.10.8.1080:FF:000001">
    <property type="entry name" value="N-acetylmuramic acid 6-phosphate etherase"/>
    <property type="match status" value="1"/>
</dbReference>
<dbReference type="FunFam" id="3.40.50.10490:FF:000014">
    <property type="entry name" value="N-acetylmuramic acid 6-phosphate etherase"/>
    <property type="match status" value="1"/>
</dbReference>
<dbReference type="Gene3D" id="1.10.8.1080">
    <property type="match status" value="1"/>
</dbReference>
<dbReference type="Gene3D" id="3.40.50.10490">
    <property type="entry name" value="Glucose-6-phosphate isomerase like protein, domain 1"/>
    <property type="match status" value="1"/>
</dbReference>
<dbReference type="HAMAP" id="MF_00068">
    <property type="entry name" value="MurQ"/>
    <property type="match status" value="1"/>
</dbReference>
<dbReference type="InterPro" id="IPR005488">
    <property type="entry name" value="Etherase_MurQ"/>
</dbReference>
<dbReference type="InterPro" id="IPR005486">
    <property type="entry name" value="Glucokinase_regulatory_CS"/>
</dbReference>
<dbReference type="InterPro" id="IPR040190">
    <property type="entry name" value="MURQ/GCKR"/>
</dbReference>
<dbReference type="InterPro" id="IPR001347">
    <property type="entry name" value="SIS_dom"/>
</dbReference>
<dbReference type="InterPro" id="IPR046348">
    <property type="entry name" value="SIS_dom_sf"/>
</dbReference>
<dbReference type="NCBIfam" id="TIGR00274">
    <property type="entry name" value="N-acetylmuramic acid 6-phosphate etherase"/>
    <property type="match status" value="1"/>
</dbReference>
<dbReference type="NCBIfam" id="NF003915">
    <property type="entry name" value="PRK05441.1"/>
    <property type="match status" value="1"/>
</dbReference>
<dbReference type="NCBIfam" id="NF009222">
    <property type="entry name" value="PRK12570.1"/>
    <property type="match status" value="1"/>
</dbReference>
<dbReference type="PANTHER" id="PTHR10088">
    <property type="entry name" value="GLUCOKINASE REGULATORY PROTEIN"/>
    <property type="match status" value="1"/>
</dbReference>
<dbReference type="PANTHER" id="PTHR10088:SF4">
    <property type="entry name" value="GLUCOKINASE REGULATORY PROTEIN"/>
    <property type="match status" value="1"/>
</dbReference>
<dbReference type="Pfam" id="PF22645">
    <property type="entry name" value="GKRP_SIS_N"/>
    <property type="match status" value="1"/>
</dbReference>
<dbReference type="SUPFAM" id="SSF53697">
    <property type="entry name" value="SIS domain"/>
    <property type="match status" value="1"/>
</dbReference>
<dbReference type="PROSITE" id="PS01272">
    <property type="entry name" value="GCKR"/>
    <property type="match status" value="1"/>
</dbReference>
<dbReference type="PROSITE" id="PS51464">
    <property type="entry name" value="SIS"/>
    <property type="match status" value="1"/>
</dbReference>
<gene>
    <name evidence="1" type="primary">murQ</name>
    <name type="ordered locus">CBO1343</name>
    <name type="ordered locus">CLC_1381</name>
</gene>
<accession>A5I1H8</accession>
<accession>A7G381</accession>